<proteinExistence type="inferred from homology"/>
<sequence length="194" mass="21067">MSFYATIILALALSMDAFAVAVCKGATLHKPHFREALRTGFIFGIIEASTPIIGWALGLYTSQYIIQWDHWVAFGLLVILGGRMIYQSLKRGDDCICEEAPQRHGSLSLIATGIATSLDAMAIGVGLAFLQVDIVHTAMTIGMMTMIMATLGMLIGRYIGPVLGKKAEIIGGMVLIAIGFNILFEHLDLFMYAH</sequence>
<name>MNTP_PROMH</name>
<accession>B4EYC2</accession>
<keyword id="KW-0997">Cell inner membrane</keyword>
<keyword id="KW-1003">Cell membrane</keyword>
<keyword id="KW-0406">Ion transport</keyword>
<keyword id="KW-0464">Manganese</keyword>
<keyword id="KW-0472">Membrane</keyword>
<keyword id="KW-1185">Reference proteome</keyword>
<keyword id="KW-0812">Transmembrane</keyword>
<keyword id="KW-1133">Transmembrane helix</keyword>
<keyword id="KW-0813">Transport</keyword>
<organism>
    <name type="scientific">Proteus mirabilis (strain HI4320)</name>
    <dbReference type="NCBI Taxonomy" id="529507"/>
    <lineage>
        <taxon>Bacteria</taxon>
        <taxon>Pseudomonadati</taxon>
        <taxon>Pseudomonadota</taxon>
        <taxon>Gammaproteobacteria</taxon>
        <taxon>Enterobacterales</taxon>
        <taxon>Morganellaceae</taxon>
        <taxon>Proteus</taxon>
    </lineage>
</organism>
<protein>
    <recommendedName>
        <fullName evidence="1">Putative manganese efflux pump MntP</fullName>
    </recommendedName>
</protein>
<reference key="1">
    <citation type="journal article" date="2008" name="J. Bacteriol.">
        <title>Complete genome sequence of uropathogenic Proteus mirabilis, a master of both adherence and motility.</title>
        <authorList>
            <person name="Pearson M.M."/>
            <person name="Sebaihia M."/>
            <person name="Churcher C."/>
            <person name="Quail M.A."/>
            <person name="Seshasayee A.S."/>
            <person name="Luscombe N.M."/>
            <person name="Abdellah Z."/>
            <person name="Arrosmith C."/>
            <person name="Atkin B."/>
            <person name="Chillingworth T."/>
            <person name="Hauser H."/>
            <person name="Jagels K."/>
            <person name="Moule S."/>
            <person name="Mungall K."/>
            <person name="Norbertczak H."/>
            <person name="Rabbinowitsch E."/>
            <person name="Walker D."/>
            <person name="Whithead S."/>
            <person name="Thomson N.R."/>
            <person name="Rather P.N."/>
            <person name="Parkhill J."/>
            <person name="Mobley H.L.T."/>
        </authorList>
    </citation>
    <scope>NUCLEOTIDE SEQUENCE [LARGE SCALE GENOMIC DNA]</scope>
    <source>
        <strain>HI4320</strain>
    </source>
</reference>
<feature type="chain" id="PRO_1000200035" description="Putative manganese efflux pump MntP">
    <location>
        <begin position="1"/>
        <end position="194"/>
    </location>
</feature>
<feature type="transmembrane region" description="Helical" evidence="1">
    <location>
        <begin position="3"/>
        <end position="23"/>
    </location>
</feature>
<feature type="transmembrane region" description="Helical" evidence="1">
    <location>
        <begin position="40"/>
        <end position="60"/>
    </location>
</feature>
<feature type="transmembrane region" description="Helical" evidence="1">
    <location>
        <begin position="65"/>
        <end position="85"/>
    </location>
</feature>
<feature type="transmembrane region" description="Helical" evidence="1">
    <location>
        <begin position="109"/>
        <end position="129"/>
    </location>
</feature>
<feature type="transmembrane region" description="Helical" evidence="1">
    <location>
        <begin position="134"/>
        <end position="154"/>
    </location>
</feature>
<feature type="transmembrane region" description="Helical" evidence="1">
    <location>
        <begin position="169"/>
        <end position="189"/>
    </location>
</feature>
<dbReference type="EMBL" id="AM942759">
    <property type="protein sequence ID" value="CAR43358.1"/>
    <property type="molecule type" value="Genomic_DNA"/>
</dbReference>
<dbReference type="RefSeq" id="WP_004248311.1">
    <property type="nucleotide sequence ID" value="NC_010554.1"/>
</dbReference>
<dbReference type="EnsemblBacteria" id="CAR43358">
    <property type="protein sequence ID" value="CAR43358"/>
    <property type="gene ID" value="PMI1608"/>
</dbReference>
<dbReference type="GeneID" id="6800880"/>
<dbReference type="KEGG" id="pmr:PMI1608"/>
<dbReference type="eggNOG" id="COG1971">
    <property type="taxonomic scope" value="Bacteria"/>
</dbReference>
<dbReference type="HOGENOM" id="CLU_096410_0_0_6"/>
<dbReference type="Proteomes" id="UP000008319">
    <property type="component" value="Chromosome"/>
</dbReference>
<dbReference type="GO" id="GO:0005886">
    <property type="term" value="C:plasma membrane"/>
    <property type="evidence" value="ECO:0007669"/>
    <property type="project" value="UniProtKB-SubCell"/>
</dbReference>
<dbReference type="GO" id="GO:0005384">
    <property type="term" value="F:manganese ion transmembrane transporter activity"/>
    <property type="evidence" value="ECO:0007669"/>
    <property type="project" value="UniProtKB-UniRule"/>
</dbReference>
<dbReference type="HAMAP" id="MF_01521">
    <property type="entry name" value="MntP_pump"/>
    <property type="match status" value="1"/>
</dbReference>
<dbReference type="InterPro" id="IPR003810">
    <property type="entry name" value="Mntp/YtaF"/>
</dbReference>
<dbReference type="InterPro" id="IPR022929">
    <property type="entry name" value="Put_MntP"/>
</dbReference>
<dbReference type="NCBIfam" id="NF008546">
    <property type="entry name" value="PRK11469.1"/>
    <property type="match status" value="1"/>
</dbReference>
<dbReference type="PANTHER" id="PTHR35529">
    <property type="entry name" value="MANGANESE EFFLUX PUMP MNTP-RELATED"/>
    <property type="match status" value="1"/>
</dbReference>
<dbReference type="PANTHER" id="PTHR35529:SF1">
    <property type="entry name" value="MANGANESE EFFLUX PUMP MNTP-RELATED"/>
    <property type="match status" value="1"/>
</dbReference>
<dbReference type="Pfam" id="PF02659">
    <property type="entry name" value="Mntp"/>
    <property type="match status" value="1"/>
</dbReference>
<gene>
    <name evidence="1" type="primary">mntP</name>
    <name type="ordered locus">PMI1608</name>
</gene>
<comment type="function">
    <text evidence="1">Probably functions as a manganese efflux pump.</text>
</comment>
<comment type="subcellular location">
    <subcellularLocation>
        <location evidence="1">Cell inner membrane</location>
        <topology evidence="1">Multi-pass membrane protein</topology>
    </subcellularLocation>
</comment>
<comment type="similarity">
    <text evidence="1">Belongs to the MntP (TC 9.B.29) family.</text>
</comment>
<evidence type="ECO:0000255" key="1">
    <source>
        <dbReference type="HAMAP-Rule" id="MF_01521"/>
    </source>
</evidence>